<organism>
    <name type="scientific">Aspergillus aculeatus (strain ATCC 16872 / CBS 172.66 / WB 5094)</name>
    <dbReference type="NCBI Taxonomy" id="690307"/>
    <lineage>
        <taxon>Eukaryota</taxon>
        <taxon>Fungi</taxon>
        <taxon>Dikarya</taxon>
        <taxon>Ascomycota</taxon>
        <taxon>Pezizomycotina</taxon>
        <taxon>Eurotiomycetes</taxon>
        <taxon>Eurotiomycetidae</taxon>
        <taxon>Eurotiales</taxon>
        <taxon>Aspergillaceae</taxon>
        <taxon>Aspergillus</taxon>
        <taxon>Aspergillus subgen. Circumdati</taxon>
    </lineage>
</organism>
<protein>
    <recommendedName>
        <fullName evidence="4">O-methyltransferase acrG</fullName>
        <ecNumber evidence="3">2.1.1.-</ecNumber>
    </recommendedName>
    <alternativeName>
        <fullName evidence="4">Acurin A biosynthesis cluster protein G</fullName>
    </alternativeName>
</protein>
<feature type="chain" id="PRO_0000450426" description="O-methyltransferase acrG">
    <location>
        <begin position="1"/>
        <end position="374"/>
    </location>
</feature>
<feature type="binding site" evidence="1">
    <location>
        <position position="19"/>
    </location>
    <ligand>
        <name>S-adenosyl-L-homocysteine</name>
        <dbReference type="ChEBI" id="CHEBI:57856"/>
    </ligand>
</feature>
<feature type="binding site" evidence="1">
    <location>
        <position position="70"/>
    </location>
    <ligand>
        <name>S-adenosyl-L-homocysteine</name>
        <dbReference type="ChEBI" id="CHEBI:57856"/>
    </ligand>
</feature>
<feature type="binding site" evidence="1">
    <location>
        <position position="96"/>
    </location>
    <ligand>
        <name>S-adenosyl-L-homocysteine</name>
        <dbReference type="ChEBI" id="CHEBI:57856"/>
    </ligand>
</feature>
<feature type="binding site" evidence="1">
    <location>
        <position position="128"/>
    </location>
    <ligand>
        <name>S-adenosyl-L-homocysteine</name>
        <dbReference type="ChEBI" id="CHEBI:57856"/>
    </ligand>
</feature>
<feature type="binding site" evidence="1">
    <location>
        <position position="129"/>
    </location>
    <ligand>
        <name>S-adenosyl-L-homocysteine</name>
        <dbReference type="ChEBI" id="CHEBI:57856"/>
    </ligand>
</feature>
<feature type="binding site" evidence="2">
    <location>
        <position position="245"/>
    </location>
    <ligand>
        <name>Mg(2+)</name>
        <dbReference type="ChEBI" id="CHEBI:18420"/>
    </ligand>
</feature>
<comment type="function">
    <text evidence="3 6">O-methyltransferase; part of the cluster that mediates the biosynthesis of acurin A, a highly reduced polyketide coupled to a serine via a peptide bond (PubMed:32234543). The activities of the highly reducing polyketide synthase acrA and the nonribosomal peptide synthetase acrB are collectively responsible for the synthesis of the acurin A core structure with a heptaketide backbone produced by acrA covalently fused to a L-serine by acrB (PubMed:32234543). After the formation of the PK-NRP hybrid product, it is detached from acrB by reductive release to set up the formation of the lactam ring by aldol condensation (Probable). The hydrolyase acrC then catalyzes water loss to generate a double bond in the ring (Probable). This double bond is probably reduced, which is followed by three oxidations at C-22 to generate the carboxylic acid moiety, involving probably the FAD-binding monooxygenase acrE and the cytochrome P450 monooxygenases acrD and acrF (Probable). Finally, a last methylation step performed by the O-methyltransferase acrG leads to the production of acurin A (Probable).</text>
</comment>
<comment type="pathway">
    <text evidence="3">Secondary metabolite biosynthesis.</text>
</comment>
<comment type="induction">
    <text evidence="3">Expression is positively regulated by the acurin A cluster-specific transcription regulator acrR.</text>
</comment>
<comment type="disruption phenotype">
    <text evidence="3">Abolishes the production of acurin A.</text>
</comment>
<comment type="similarity">
    <text evidence="5">Belongs to the methyltransferase superfamily. Type-7 methyltransferase family.</text>
</comment>
<sequence length="374" mass="40910">MSPAKVSANDVPMHGNGFYSSNSALQHSAMLNALPLLAAAAAASKAKQQEEQENSRPFAILEFGSAHGNNSHTPITTVLKSRAPAPSREIHLQFNDRPTNDFSTLATNLTTMTWPVSNAIFTSLLPASFYSRVSPKGSVDVAFSLAALHHLDRVTPVPPEGPIPTHEVRQAEFRAQAHADLLSFLSHRAEEIVPGGGLVLSFVGQELGPNGEEITNYAGPVDACRSAMIDMLQAGVLSPAVANVFEVPAYNRTIADVRRTLAEGEVVAAWEVEEVFERKVVHPALQELEARREAAPGKEEEHAEWYARTVVDWLMAVVAGYFVKAVREGMGVTDQTVLDGLLAEWVERTRGRFLEGHRNEPVECWFVYVRLGRK</sequence>
<evidence type="ECO:0000250" key="1">
    <source>
        <dbReference type="UniProtKB" id="A0A6C0WW36"/>
    </source>
</evidence>
<evidence type="ECO:0000250" key="2">
    <source>
        <dbReference type="UniProtKB" id="Q9FLN8"/>
    </source>
</evidence>
<evidence type="ECO:0000269" key="3">
    <source>
    </source>
</evidence>
<evidence type="ECO:0000303" key="4">
    <source>
    </source>
</evidence>
<evidence type="ECO:0000305" key="5"/>
<evidence type="ECO:0000305" key="6">
    <source>
    </source>
</evidence>
<accession>A0A1L9WQN9</accession>
<dbReference type="EC" id="2.1.1.-" evidence="3"/>
<dbReference type="EMBL" id="KV878980">
    <property type="protein sequence ID" value="OJJ98491.1"/>
    <property type="molecule type" value="Genomic_DNA"/>
</dbReference>
<dbReference type="RefSeq" id="XP_020054831.1">
    <property type="nucleotide sequence ID" value="XM_020196520.1"/>
</dbReference>
<dbReference type="SMR" id="A0A1L9WQN9"/>
<dbReference type="GeneID" id="30970334"/>
<dbReference type="VEuPathDB" id="FungiDB:ASPACDRAFT_122283"/>
<dbReference type="OMA" id="RPYHAAG"/>
<dbReference type="OrthoDB" id="1523883at2759"/>
<dbReference type="Proteomes" id="UP000184546">
    <property type="component" value="Unassembled WGS sequence"/>
</dbReference>
<dbReference type="GO" id="GO:0046872">
    <property type="term" value="F:metal ion binding"/>
    <property type="evidence" value="ECO:0007669"/>
    <property type="project" value="UniProtKB-KW"/>
</dbReference>
<dbReference type="GO" id="GO:0008168">
    <property type="term" value="F:methyltransferase activity"/>
    <property type="evidence" value="ECO:0007669"/>
    <property type="project" value="UniProtKB-KW"/>
</dbReference>
<dbReference type="GO" id="GO:0032259">
    <property type="term" value="P:methylation"/>
    <property type="evidence" value="ECO:0007669"/>
    <property type="project" value="UniProtKB-KW"/>
</dbReference>
<dbReference type="Gene3D" id="1.10.1200.270">
    <property type="entry name" value="Methyltransferase, alpha-helical capping domain"/>
    <property type="match status" value="1"/>
</dbReference>
<dbReference type="Gene3D" id="3.40.50.150">
    <property type="entry name" value="Vaccinia Virus protein VP39"/>
    <property type="match status" value="1"/>
</dbReference>
<dbReference type="InterPro" id="IPR005299">
    <property type="entry name" value="MeTrfase_7"/>
</dbReference>
<dbReference type="InterPro" id="IPR042086">
    <property type="entry name" value="MeTrfase_capping"/>
</dbReference>
<dbReference type="InterPro" id="IPR029063">
    <property type="entry name" value="SAM-dependent_MTases_sf"/>
</dbReference>
<dbReference type="PANTHER" id="PTHR31009">
    <property type="entry name" value="S-ADENOSYL-L-METHIONINE:CARBOXYL METHYLTRANSFERASE FAMILY PROTEIN"/>
    <property type="match status" value="1"/>
</dbReference>
<dbReference type="Pfam" id="PF03492">
    <property type="entry name" value="Methyltransf_7"/>
    <property type="match status" value="1"/>
</dbReference>
<dbReference type="SUPFAM" id="SSF53335">
    <property type="entry name" value="S-adenosyl-L-methionine-dependent methyltransferases"/>
    <property type="match status" value="1"/>
</dbReference>
<reference key="1">
    <citation type="journal article" date="2017" name="Genome Biol.">
        <title>Comparative genomics reveals high biological diversity and specific adaptations in the industrially and medically important fungal genus Aspergillus.</title>
        <authorList>
            <person name="de Vries R.P."/>
            <person name="Riley R."/>
            <person name="Wiebenga A."/>
            <person name="Aguilar-Osorio G."/>
            <person name="Amillis S."/>
            <person name="Uchima C.A."/>
            <person name="Anderluh G."/>
            <person name="Asadollahi M."/>
            <person name="Askin M."/>
            <person name="Barry K."/>
            <person name="Battaglia E."/>
            <person name="Bayram O."/>
            <person name="Benocci T."/>
            <person name="Braus-Stromeyer S.A."/>
            <person name="Caldana C."/>
            <person name="Canovas D."/>
            <person name="Cerqueira G.C."/>
            <person name="Chen F."/>
            <person name="Chen W."/>
            <person name="Choi C."/>
            <person name="Clum A."/>
            <person name="Dos Santos R.A."/>
            <person name="Damasio A.R."/>
            <person name="Diallinas G."/>
            <person name="Emri T."/>
            <person name="Fekete E."/>
            <person name="Flipphi M."/>
            <person name="Freyberg S."/>
            <person name="Gallo A."/>
            <person name="Gournas C."/>
            <person name="Habgood R."/>
            <person name="Hainaut M."/>
            <person name="Harispe M.L."/>
            <person name="Henrissat B."/>
            <person name="Hilden K.S."/>
            <person name="Hope R."/>
            <person name="Hossain A."/>
            <person name="Karabika E."/>
            <person name="Karaffa L."/>
            <person name="Karanyi Z."/>
            <person name="Krasevec N."/>
            <person name="Kuo A."/>
            <person name="Kusch H."/>
            <person name="LaButti K."/>
            <person name="Lagendijk E.L."/>
            <person name="Lapidus A."/>
            <person name="Levasseur A."/>
            <person name="Lindquist E."/>
            <person name="Lipzen A."/>
            <person name="Logrieco A.F."/>
            <person name="MacCabe A."/>
            <person name="Maekelae M.R."/>
            <person name="Malavazi I."/>
            <person name="Melin P."/>
            <person name="Meyer V."/>
            <person name="Mielnichuk N."/>
            <person name="Miskei M."/>
            <person name="Molnar A.P."/>
            <person name="Mule G."/>
            <person name="Ngan C.Y."/>
            <person name="Orejas M."/>
            <person name="Orosz E."/>
            <person name="Ouedraogo J.P."/>
            <person name="Overkamp K.M."/>
            <person name="Park H.-S."/>
            <person name="Perrone G."/>
            <person name="Piumi F."/>
            <person name="Punt P.J."/>
            <person name="Ram A.F."/>
            <person name="Ramon A."/>
            <person name="Rauscher S."/>
            <person name="Record E."/>
            <person name="Riano-Pachon D.M."/>
            <person name="Robert V."/>
            <person name="Roehrig J."/>
            <person name="Ruller R."/>
            <person name="Salamov A."/>
            <person name="Salih N.S."/>
            <person name="Samson R.A."/>
            <person name="Sandor E."/>
            <person name="Sanguinetti M."/>
            <person name="Schuetze T."/>
            <person name="Sepcic K."/>
            <person name="Shelest E."/>
            <person name="Sherlock G."/>
            <person name="Sophianopoulou V."/>
            <person name="Squina F.M."/>
            <person name="Sun H."/>
            <person name="Susca A."/>
            <person name="Todd R.B."/>
            <person name="Tsang A."/>
            <person name="Unkles S.E."/>
            <person name="van de Wiele N."/>
            <person name="van Rossen-Uffink D."/>
            <person name="Oliveira J.V."/>
            <person name="Vesth T.C."/>
            <person name="Visser J."/>
            <person name="Yu J.-H."/>
            <person name="Zhou M."/>
            <person name="Andersen M.R."/>
            <person name="Archer D.B."/>
            <person name="Baker S.E."/>
            <person name="Benoit I."/>
            <person name="Brakhage A.A."/>
            <person name="Braus G.H."/>
            <person name="Fischer R."/>
            <person name="Frisvad J.C."/>
            <person name="Goldman G.H."/>
            <person name="Houbraken J."/>
            <person name="Oakley B."/>
            <person name="Pocsi I."/>
            <person name="Scazzocchio C."/>
            <person name="Seiboth B."/>
            <person name="vanKuyk P.A."/>
            <person name="Wortman J."/>
            <person name="Dyer P.S."/>
            <person name="Grigoriev I.V."/>
        </authorList>
    </citation>
    <scope>NUCLEOTIDE SEQUENCE [LARGE SCALE GENOMIC DNA]</scope>
    <source>
        <strain>ATCC 16872 / CBS 172.66 / WB 5094</strain>
    </source>
</reference>
<reference key="2">
    <citation type="journal article" date="2020" name="Fungal Genet. Biol.">
        <title>Acurin A, a novel hybrid compound, biosynthesized by individually translated PKS- and NRPS-encoding genes in Aspergillus aculeatus.</title>
        <authorList>
            <person name="Wolff P.B."/>
            <person name="Nielsen M.L."/>
            <person name="Slot J.C."/>
            <person name="Andersen L.N."/>
            <person name="Petersen L.M."/>
            <person name="Isbrandt T."/>
            <person name="Holm D.K."/>
            <person name="Mortensen U.H."/>
            <person name="Noedvig C.S."/>
            <person name="Larsen T.O."/>
            <person name="Hoof J.B."/>
        </authorList>
    </citation>
    <scope>FUNCTION</scope>
    <scope>DISRUPTION PHENOTYPE</scope>
    <scope>PATHWAY</scope>
    <scope>INDUCTION</scope>
</reference>
<name>ACRG_ASPA1</name>
<keyword id="KW-0460">Magnesium</keyword>
<keyword id="KW-0479">Metal-binding</keyword>
<keyword id="KW-0489">Methyltransferase</keyword>
<keyword id="KW-1185">Reference proteome</keyword>
<keyword id="KW-0949">S-adenosyl-L-methionine</keyword>
<keyword id="KW-0808">Transferase</keyword>
<proteinExistence type="evidence at transcript level"/>
<gene>
    <name evidence="4" type="primary">acrG</name>
    <name type="ORF">ASPACDRAFT_122283</name>
</gene>